<keyword id="KW-0997">Cell inner membrane</keyword>
<keyword id="KW-1003">Cell membrane</keyword>
<keyword id="KW-0406">Ion transport</keyword>
<keyword id="KW-0408">Iron</keyword>
<keyword id="KW-0472">Membrane</keyword>
<keyword id="KW-0479">Metal-binding</keyword>
<keyword id="KW-1185">Reference proteome</keyword>
<keyword id="KW-0812">Transmembrane</keyword>
<keyword id="KW-1133">Transmembrane helix</keyword>
<keyword id="KW-0813">Transport</keyword>
<keyword id="KW-0862">Zinc</keyword>
<keyword id="KW-0864">Zinc transport</keyword>
<gene>
    <name evidence="1" type="primary">zupT</name>
    <name type="ordered locus">Ecok1_30610</name>
    <name type="ORF">APECO1_3371</name>
</gene>
<dbReference type="EMBL" id="CP000468">
    <property type="protein sequence ID" value="ABJ02555.1"/>
    <property type="molecule type" value="Genomic_DNA"/>
</dbReference>
<dbReference type="RefSeq" id="WP_001295627.1">
    <property type="nucleotide sequence ID" value="NZ_CADILS010000120.1"/>
</dbReference>
<dbReference type="SMR" id="A1AFW5"/>
<dbReference type="GeneID" id="93778954"/>
<dbReference type="KEGG" id="ecv:APECO1_3371"/>
<dbReference type="HOGENOM" id="CLU_015114_1_3_6"/>
<dbReference type="Proteomes" id="UP000008216">
    <property type="component" value="Chromosome"/>
</dbReference>
<dbReference type="GO" id="GO:0005886">
    <property type="term" value="C:plasma membrane"/>
    <property type="evidence" value="ECO:0007669"/>
    <property type="project" value="UniProtKB-SubCell"/>
</dbReference>
<dbReference type="GO" id="GO:0046872">
    <property type="term" value="F:metal ion binding"/>
    <property type="evidence" value="ECO:0007669"/>
    <property type="project" value="UniProtKB-KW"/>
</dbReference>
<dbReference type="GO" id="GO:0005385">
    <property type="term" value="F:zinc ion transmembrane transporter activity"/>
    <property type="evidence" value="ECO:0007669"/>
    <property type="project" value="UniProtKB-UniRule"/>
</dbReference>
<dbReference type="HAMAP" id="MF_00548">
    <property type="entry name" value="ZupT"/>
    <property type="match status" value="1"/>
</dbReference>
<dbReference type="InterPro" id="IPR003689">
    <property type="entry name" value="ZIP"/>
</dbReference>
<dbReference type="InterPro" id="IPR023498">
    <property type="entry name" value="Zn_transptr_ZupT"/>
</dbReference>
<dbReference type="NCBIfam" id="NF003243">
    <property type="entry name" value="PRK04201.1"/>
    <property type="match status" value="1"/>
</dbReference>
<dbReference type="PANTHER" id="PTHR11040:SF205">
    <property type="entry name" value="ZINC TRANSPORTER ZUPT"/>
    <property type="match status" value="1"/>
</dbReference>
<dbReference type="PANTHER" id="PTHR11040">
    <property type="entry name" value="ZINC/IRON TRANSPORTER"/>
    <property type="match status" value="1"/>
</dbReference>
<dbReference type="Pfam" id="PF02535">
    <property type="entry name" value="Zip"/>
    <property type="match status" value="2"/>
</dbReference>
<organism>
    <name type="scientific">Escherichia coli O1:K1 / APEC</name>
    <dbReference type="NCBI Taxonomy" id="405955"/>
    <lineage>
        <taxon>Bacteria</taxon>
        <taxon>Pseudomonadati</taxon>
        <taxon>Pseudomonadota</taxon>
        <taxon>Gammaproteobacteria</taxon>
        <taxon>Enterobacterales</taxon>
        <taxon>Enterobacteriaceae</taxon>
        <taxon>Escherichia</taxon>
    </lineage>
</organism>
<name>ZUPT_ECOK1</name>
<accession>A1AFW5</accession>
<comment type="function">
    <text evidence="1">Mediates zinc uptake. May also transport other divalent cations.</text>
</comment>
<comment type="catalytic activity">
    <reaction evidence="1">
        <text>Zn(2+)(in) = Zn(2+)(out)</text>
        <dbReference type="Rhea" id="RHEA:29351"/>
        <dbReference type="ChEBI" id="CHEBI:29105"/>
    </reaction>
</comment>
<comment type="subcellular location">
    <subcellularLocation>
        <location evidence="1">Cell inner membrane</location>
        <topology evidence="1">Multi-pass membrane protein</topology>
    </subcellularLocation>
</comment>
<comment type="similarity">
    <text evidence="1">Belongs to the ZIP transporter (TC 2.A.5) family. ZupT subfamily.</text>
</comment>
<feature type="chain" id="PRO_1000017773" description="Zinc transporter ZupT">
    <location>
        <begin position="1"/>
        <end position="257"/>
    </location>
</feature>
<feature type="transmembrane region" description="Helical" evidence="1">
    <location>
        <begin position="5"/>
        <end position="25"/>
    </location>
</feature>
<feature type="transmembrane region" description="Helical" evidence="1">
    <location>
        <begin position="32"/>
        <end position="52"/>
    </location>
</feature>
<feature type="transmembrane region" description="Helical" evidence="1">
    <location>
        <begin position="61"/>
        <end position="81"/>
    </location>
</feature>
<feature type="transmembrane region" description="Helical" evidence="1">
    <location>
        <begin position="137"/>
        <end position="157"/>
    </location>
</feature>
<feature type="transmembrane region" description="Helical" evidence="1">
    <location>
        <begin position="171"/>
        <end position="191"/>
    </location>
</feature>
<feature type="transmembrane region" description="Helical" evidence="1">
    <location>
        <begin position="195"/>
        <end position="215"/>
    </location>
</feature>
<feature type="transmembrane region" description="Helical" evidence="1">
    <location>
        <begin position="236"/>
        <end position="256"/>
    </location>
</feature>
<feature type="binding site" description="M2 metal binding site" evidence="1">
    <location>
        <position position="120"/>
    </location>
    <ligand>
        <name>Fe(2+)</name>
        <dbReference type="ChEBI" id="CHEBI:29033"/>
    </ligand>
</feature>
<feature type="binding site" description="M2 metal binding site" evidence="1">
    <location>
        <position position="123"/>
    </location>
    <ligand>
        <name>Fe(2+)</name>
        <dbReference type="ChEBI" id="CHEBI:29033"/>
    </ligand>
</feature>
<feature type="binding site" description="M1 metal binding site" evidence="1">
    <location>
        <position position="123"/>
    </location>
    <ligand>
        <name>Zn(2+)</name>
        <dbReference type="ChEBI" id="CHEBI:29105"/>
    </ligand>
</feature>
<feature type="binding site" description="M1 metal binding site" evidence="1">
    <location>
        <position position="148"/>
    </location>
    <ligand>
        <name>Zn(2+)</name>
        <dbReference type="ChEBI" id="CHEBI:29105"/>
    </ligand>
</feature>
<feature type="binding site" description="M2 metal binding site" evidence="1">
    <location>
        <position position="149"/>
    </location>
    <ligand>
        <name>Fe(2+)</name>
        <dbReference type="ChEBI" id="CHEBI:29033"/>
    </ligand>
</feature>
<feature type="binding site" description="M2 metal binding site" evidence="1">
    <location>
        <position position="152"/>
    </location>
    <ligand>
        <name>Fe(2+)</name>
        <dbReference type="ChEBI" id="CHEBI:29033"/>
    </ligand>
</feature>
<feature type="binding site" description="M1 metal binding site" evidence="1">
    <location>
        <position position="152"/>
    </location>
    <ligand>
        <name>Zn(2+)</name>
        <dbReference type="ChEBI" id="CHEBI:29105"/>
    </ligand>
</feature>
<feature type="binding site" description="M2 metal binding site" evidence="1">
    <location>
        <position position="181"/>
    </location>
    <ligand>
        <name>Fe(2+)</name>
        <dbReference type="ChEBI" id="CHEBI:29033"/>
    </ligand>
</feature>
<reference key="1">
    <citation type="journal article" date="2007" name="J. Bacteriol.">
        <title>The genome sequence of avian pathogenic Escherichia coli strain O1:K1:H7 shares strong similarities with human extraintestinal pathogenic E. coli genomes.</title>
        <authorList>
            <person name="Johnson T.J."/>
            <person name="Kariyawasam S."/>
            <person name="Wannemuehler Y."/>
            <person name="Mangiamele P."/>
            <person name="Johnson S.J."/>
            <person name="Doetkott C."/>
            <person name="Skyberg J.A."/>
            <person name="Lynne A.M."/>
            <person name="Johnson J.R."/>
            <person name="Nolan L.K."/>
        </authorList>
    </citation>
    <scope>NUCLEOTIDE SEQUENCE [LARGE SCALE GENOMIC DNA]</scope>
</reference>
<evidence type="ECO:0000255" key="1">
    <source>
        <dbReference type="HAMAP-Rule" id="MF_00548"/>
    </source>
</evidence>
<proteinExistence type="inferred from homology"/>
<sequence>MSVPLILTILAGAATFIGAFLGVLGQKPSNRLLAFSLGFAAGIMLLISLMEMLPAALAAEGMSPVLGYGMFIFGLLGYFGLDRMLPHAHPQDLMQKSVQPLPKSIKRTAILLTLGISLHNFPEGIATFVTASSNLELGFGIALAVALHNIPEGLAVAGPVYAATGSKRTAILWAGISGLAEILGGVLAWLILGSMISPVVMAAIMAAVAGIMVALSVDELMPLAKEIDPNNNPSYGVLCGMSVMGFSLVLLQTAGIG</sequence>
<protein>
    <recommendedName>
        <fullName evidence="1">Zinc transporter ZupT</fullName>
    </recommendedName>
</protein>